<organism>
    <name type="scientific">Streptomyces coelicolor (strain ATCC BAA-471 / A3(2) / M145)</name>
    <dbReference type="NCBI Taxonomy" id="100226"/>
    <lineage>
        <taxon>Bacteria</taxon>
        <taxon>Bacillati</taxon>
        <taxon>Actinomycetota</taxon>
        <taxon>Actinomycetes</taxon>
        <taxon>Kitasatosporales</taxon>
        <taxon>Streptomycetaceae</taxon>
        <taxon>Streptomyces</taxon>
        <taxon>Streptomyces albidoflavus group</taxon>
    </lineage>
</organism>
<gene>
    <name type="ordered locus">SCO2592</name>
    <name type="ORF">SCC88.03c</name>
</gene>
<sequence>MKITFLLTWGDEMGGTEQAVYTQATHLAPRHDIEVLSVFKTREQPFFSVDERVSVRYLVDRTGKTERPVRESDLTAEDCRHLAGLPSDLISPKWEATFDALSDVEMQRALRTIDTDVLITTSPALMSAVADLAPSRVITIQQEHRPSQLRGGTGEPLLLRAPAIDALVVLTERTKQWLEESLGKAAPRLAAIPNAIPEGFRPRSSLTGKTIVMPRRLVPDKQVDHAIQAFAKALPDHPGWRLRIFGDGPQMSRLRNLIQGLGLHDSVELLGPSQHMTEEWARASLTILPSQDGEAFPLVLLEAFAAGVPAVAYDIVTGPAEIIRHGEDGLLVPPNDVESLAEAISRLMGDEALLRSYGEKAHEGSTRFAADVIVKQWEELFTELVSRRDDPRRMAERADRIAHRVAHGGAGRFHAAVAADRTAPSSGDQRAREVVIGASDRSLVRAGGRLSEVRDDLQGSEIVQRNFETVVEALESSGIPYVLLRDRDDNPRRRLAVDAAEQTRVRKALAGAYEGKAVYAELLKPRTHAPGVLLAERLEAVGEVAGLRVFRPVVTSTRTLRFGPAYGCDIEFWRQVPEEEGGDGQFVAPLRPSAVGPKLPSLTPDARTRVKDREYPTLEPLTRKLVSDITFPVDAVYTWVDDSDPRWQERRARRRAALGLEAESSGDEAARFRNRDELRYSLRSLAMFAPWIRKIYLVTDDQTPEWLNTEHEGIEVVSHRDIFTDQDCLPTFNSHSIESQLHHIDGLSEQFLYLNDDVFIGRPVGAQRFFLPNGASRFFWSPTTVPVGEPTEEDEGYFAAAKNNRALLEERFGVTVANSFVHAPHPLRRSVLESIEEDFPESVARTAATPMRGWQDISMVSSLHHHYGYLTGASVPSSIRCAYIDVGTYSRHPELTRLLAMRGHDVFCLGESQDAEVPEHEQARIVEAFLRAYFPVKSPYER</sequence>
<reference key="1">
    <citation type="journal article" date="2002" name="Nature">
        <title>Complete genome sequence of the model actinomycete Streptomyces coelicolor A3(2).</title>
        <authorList>
            <person name="Bentley S.D."/>
            <person name="Chater K.F."/>
            <person name="Cerdeno-Tarraga A.-M."/>
            <person name="Challis G.L."/>
            <person name="Thomson N.R."/>
            <person name="James K.D."/>
            <person name="Harris D.E."/>
            <person name="Quail M.A."/>
            <person name="Kieser H."/>
            <person name="Harper D."/>
            <person name="Bateman A."/>
            <person name="Brown S."/>
            <person name="Chandra G."/>
            <person name="Chen C.W."/>
            <person name="Collins M."/>
            <person name="Cronin A."/>
            <person name="Fraser A."/>
            <person name="Goble A."/>
            <person name="Hidalgo J."/>
            <person name="Hornsby T."/>
            <person name="Howarth S."/>
            <person name="Huang C.-H."/>
            <person name="Kieser T."/>
            <person name="Larke L."/>
            <person name="Murphy L.D."/>
            <person name="Oliver K."/>
            <person name="O'Neil S."/>
            <person name="Rabbinowitsch E."/>
            <person name="Rajandream M.A."/>
            <person name="Rutherford K.M."/>
            <person name="Rutter S."/>
            <person name="Seeger K."/>
            <person name="Saunders D."/>
            <person name="Sharp S."/>
            <person name="Squares R."/>
            <person name="Squares S."/>
            <person name="Taylor K."/>
            <person name="Warren T."/>
            <person name="Wietzorrek A."/>
            <person name="Woodward J.R."/>
            <person name="Barrell B.G."/>
            <person name="Parkhill J."/>
            <person name="Hopwood D.A."/>
        </authorList>
    </citation>
    <scope>NUCLEOTIDE SEQUENCE [LARGE SCALE GENOMIC DNA]</scope>
    <source>
        <strain>ATCC BAA-471 / A3(2) / M145</strain>
    </source>
</reference>
<reference key="2">
    <citation type="journal article" date="2005" name="PLoS Comput. Biol.">
        <title>Stealth proteins: in silico identification of a novel protein family rendering bacterial pathogens invisible to host immune defense.</title>
        <authorList>
            <person name="Sperisen P."/>
            <person name="Schmid C.D."/>
            <person name="Bucher P."/>
            <person name="Zilian O."/>
        </authorList>
    </citation>
    <scope>IDENTIFICATION AS A STEALTH PROTEIN</scope>
    <scope>PREDICTION OF FUNCTION</scope>
</reference>
<comment type="miscellaneous">
    <text>Stealth proteins are part of a protein family that is conserved from bacteria to higher eukaryotes. Family members were first identified in microbes as proteins that help pathogens to elude the host innate immune system. Microbial stealth proteins are involved in the biosynthesis of exopolysaccharides. Stealth proteins are predicted to function as hexose-1-phosphoryltransferases.</text>
</comment>
<comment type="similarity">
    <text evidence="1">Belongs to the stealth family.</text>
</comment>
<feature type="chain" id="PRO_0000235959" description="Exopolysaccharide phosphotransferase SCO2592">
    <location>
        <begin position="1"/>
        <end position="942"/>
    </location>
</feature>
<accession>Q9L1I4</accession>
<protein>
    <recommendedName>
        <fullName>Exopolysaccharide phosphotransferase SCO2592</fullName>
        <ecNumber>2.7.-.-</ecNumber>
    </recommendedName>
    <alternativeName>
        <fullName>Stealth protein SCO2592</fullName>
    </alternativeName>
</protein>
<keyword id="KW-0270">Exopolysaccharide synthesis</keyword>
<keyword id="KW-1185">Reference proteome</keyword>
<keyword id="KW-0808">Transferase</keyword>
<proteinExistence type="inferred from homology"/>
<dbReference type="EC" id="2.7.-.-"/>
<dbReference type="EMBL" id="AL939113">
    <property type="protein sequence ID" value="CAB75373.1"/>
    <property type="molecule type" value="Genomic_DNA"/>
</dbReference>
<dbReference type="RefSeq" id="NP_626829.1">
    <property type="nucleotide sequence ID" value="NC_003888.3"/>
</dbReference>
<dbReference type="RefSeq" id="WP_011028443.1">
    <property type="nucleotide sequence ID" value="NZ_VNID01000001.1"/>
</dbReference>
<dbReference type="SMR" id="Q9L1I4"/>
<dbReference type="FunCoup" id="Q9L1I4">
    <property type="interactions" value="37"/>
</dbReference>
<dbReference type="STRING" id="100226.gene:17760196"/>
<dbReference type="CAZy" id="GT4">
    <property type="family name" value="Glycosyltransferase Family 4"/>
</dbReference>
<dbReference type="PaxDb" id="100226-SCO2592"/>
<dbReference type="KEGG" id="sco:SCO2592"/>
<dbReference type="PATRIC" id="fig|100226.15.peg.2638"/>
<dbReference type="eggNOG" id="COG0438">
    <property type="taxonomic scope" value="Bacteria"/>
</dbReference>
<dbReference type="HOGENOM" id="CLU_311673_0_0_11"/>
<dbReference type="InParanoid" id="Q9L1I4"/>
<dbReference type="OrthoDB" id="570545at2"/>
<dbReference type="PhylomeDB" id="Q9L1I4"/>
<dbReference type="Proteomes" id="UP000001973">
    <property type="component" value="Chromosome"/>
</dbReference>
<dbReference type="GO" id="GO:0016757">
    <property type="term" value="F:glycosyltransferase activity"/>
    <property type="evidence" value="ECO:0007669"/>
    <property type="project" value="InterPro"/>
</dbReference>
<dbReference type="GO" id="GO:0016772">
    <property type="term" value="F:transferase activity, transferring phosphorus-containing groups"/>
    <property type="evidence" value="ECO:0007669"/>
    <property type="project" value="InterPro"/>
</dbReference>
<dbReference type="GO" id="GO:0000271">
    <property type="term" value="P:polysaccharide biosynthetic process"/>
    <property type="evidence" value="ECO:0007669"/>
    <property type="project" value="UniProtKB-KW"/>
</dbReference>
<dbReference type="CDD" id="cd03820">
    <property type="entry name" value="GT4_AmsD-like"/>
    <property type="match status" value="1"/>
</dbReference>
<dbReference type="Gene3D" id="3.40.50.2000">
    <property type="entry name" value="Glycogen Phosphorylase B"/>
    <property type="match status" value="2"/>
</dbReference>
<dbReference type="InterPro" id="IPR001296">
    <property type="entry name" value="Glyco_trans_1"/>
</dbReference>
<dbReference type="InterPro" id="IPR047141">
    <property type="entry name" value="Stealth"/>
</dbReference>
<dbReference type="InterPro" id="IPR031358">
    <property type="entry name" value="Stealth_CR1"/>
</dbReference>
<dbReference type="InterPro" id="IPR021520">
    <property type="entry name" value="Stealth_CR2"/>
</dbReference>
<dbReference type="InterPro" id="IPR031357">
    <property type="entry name" value="Stealth_CR3"/>
</dbReference>
<dbReference type="InterPro" id="IPR031356">
    <property type="entry name" value="Stealth_CR4"/>
</dbReference>
<dbReference type="PANTHER" id="PTHR24045">
    <property type="match status" value="1"/>
</dbReference>
<dbReference type="PANTHER" id="PTHR24045:SF0">
    <property type="entry name" value="N-ACETYLGLUCOSAMINE-1-PHOSPHOTRANSFERASE SUBUNITS ALPHA_BETA"/>
    <property type="match status" value="1"/>
</dbReference>
<dbReference type="Pfam" id="PF00534">
    <property type="entry name" value="Glycos_transf_1"/>
    <property type="match status" value="1"/>
</dbReference>
<dbReference type="Pfam" id="PF17101">
    <property type="entry name" value="Stealth_CR1"/>
    <property type="match status" value="1"/>
</dbReference>
<dbReference type="Pfam" id="PF11380">
    <property type="entry name" value="Stealth_CR2"/>
    <property type="match status" value="1"/>
</dbReference>
<dbReference type="Pfam" id="PF17102">
    <property type="entry name" value="Stealth_CR3"/>
    <property type="match status" value="1"/>
</dbReference>
<dbReference type="Pfam" id="PF17103">
    <property type="entry name" value="Stealth_CR4"/>
    <property type="match status" value="1"/>
</dbReference>
<dbReference type="SUPFAM" id="SSF53756">
    <property type="entry name" value="UDP-Glycosyltransferase/glycogen phosphorylase"/>
    <property type="match status" value="1"/>
</dbReference>
<name>Y2592_STRCO</name>
<evidence type="ECO:0000305" key="1"/>